<proteinExistence type="inferred from homology"/>
<feature type="chain" id="PRO_1000086985" description="Large ribosomal subunit protein bL21">
    <location>
        <begin position="1"/>
        <end position="103"/>
    </location>
</feature>
<accession>A6WDN1</accession>
<organism>
    <name type="scientific">Kineococcus radiotolerans (strain ATCC BAA-149 / DSM 14245 / SRS30216)</name>
    <dbReference type="NCBI Taxonomy" id="266940"/>
    <lineage>
        <taxon>Bacteria</taxon>
        <taxon>Bacillati</taxon>
        <taxon>Actinomycetota</taxon>
        <taxon>Actinomycetes</taxon>
        <taxon>Kineosporiales</taxon>
        <taxon>Kineosporiaceae</taxon>
        <taxon>Kineococcus</taxon>
    </lineage>
</organism>
<gene>
    <name evidence="1" type="primary">rplU</name>
    <name type="ordered locus">Krad_3457</name>
</gene>
<dbReference type="EMBL" id="CP000750">
    <property type="protein sequence ID" value="ABS04920.1"/>
    <property type="molecule type" value="Genomic_DNA"/>
</dbReference>
<dbReference type="SMR" id="A6WDN1"/>
<dbReference type="STRING" id="266940.Krad_3457"/>
<dbReference type="KEGG" id="kra:Krad_3457"/>
<dbReference type="eggNOG" id="COG0261">
    <property type="taxonomic scope" value="Bacteria"/>
</dbReference>
<dbReference type="HOGENOM" id="CLU_061463_3_0_11"/>
<dbReference type="OrthoDB" id="9813334at2"/>
<dbReference type="Proteomes" id="UP000001116">
    <property type="component" value="Chromosome"/>
</dbReference>
<dbReference type="GO" id="GO:0005737">
    <property type="term" value="C:cytoplasm"/>
    <property type="evidence" value="ECO:0007669"/>
    <property type="project" value="UniProtKB-ARBA"/>
</dbReference>
<dbReference type="GO" id="GO:1990904">
    <property type="term" value="C:ribonucleoprotein complex"/>
    <property type="evidence" value="ECO:0007669"/>
    <property type="project" value="UniProtKB-KW"/>
</dbReference>
<dbReference type="GO" id="GO:0005840">
    <property type="term" value="C:ribosome"/>
    <property type="evidence" value="ECO:0007669"/>
    <property type="project" value="UniProtKB-KW"/>
</dbReference>
<dbReference type="GO" id="GO:0019843">
    <property type="term" value="F:rRNA binding"/>
    <property type="evidence" value="ECO:0007669"/>
    <property type="project" value="UniProtKB-UniRule"/>
</dbReference>
<dbReference type="GO" id="GO:0003735">
    <property type="term" value="F:structural constituent of ribosome"/>
    <property type="evidence" value="ECO:0007669"/>
    <property type="project" value="InterPro"/>
</dbReference>
<dbReference type="GO" id="GO:0006412">
    <property type="term" value="P:translation"/>
    <property type="evidence" value="ECO:0007669"/>
    <property type="project" value="UniProtKB-UniRule"/>
</dbReference>
<dbReference type="HAMAP" id="MF_01363">
    <property type="entry name" value="Ribosomal_bL21"/>
    <property type="match status" value="1"/>
</dbReference>
<dbReference type="InterPro" id="IPR028909">
    <property type="entry name" value="bL21-like"/>
</dbReference>
<dbReference type="InterPro" id="IPR036164">
    <property type="entry name" value="bL21-like_sf"/>
</dbReference>
<dbReference type="InterPro" id="IPR001787">
    <property type="entry name" value="Ribosomal_bL21"/>
</dbReference>
<dbReference type="InterPro" id="IPR018258">
    <property type="entry name" value="Ribosomal_bL21_CS"/>
</dbReference>
<dbReference type="NCBIfam" id="TIGR00061">
    <property type="entry name" value="L21"/>
    <property type="match status" value="1"/>
</dbReference>
<dbReference type="PANTHER" id="PTHR21349">
    <property type="entry name" value="50S RIBOSOMAL PROTEIN L21"/>
    <property type="match status" value="1"/>
</dbReference>
<dbReference type="PANTHER" id="PTHR21349:SF0">
    <property type="entry name" value="LARGE RIBOSOMAL SUBUNIT PROTEIN BL21M"/>
    <property type="match status" value="1"/>
</dbReference>
<dbReference type="Pfam" id="PF00829">
    <property type="entry name" value="Ribosomal_L21p"/>
    <property type="match status" value="1"/>
</dbReference>
<dbReference type="SUPFAM" id="SSF141091">
    <property type="entry name" value="L21p-like"/>
    <property type="match status" value="1"/>
</dbReference>
<dbReference type="PROSITE" id="PS01169">
    <property type="entry name" value="RIBOSOMAL_L21"/>
    <property type="match status" value="1"/>
</dbReference>
<name>RL21_KINRD</name>
<protein>
    <recommendedName>
        <fullName evidence="1">Large ribosomal subunit protein bL21</fullName>
    </recommendedName>
    <alternativeName>
        <fullName evidence="2">50S ribosomal protein L21</fullName>
    </alternativeName>
</protein>
<comment type="function">
    <text evidence="1">This protein binds to 23S rRNA in the presence of protein L20.</text>
</comment>
<comment type="subunit">
    <text evidence="1">Part of the 50S ribosomal subunit. Contacts protein L20.</text>
</comment>
<comment type="similarity">
    <text evidence="1">Belongs to the bacterial ribosomal protein bL21 family.</text>
</comment>
<keyword id="KW-1185">Reference proteome</keyword>
<keyword id="KW-0687">Ribonucleoprotein</keyword>
<keyword id="KW-0689">Ribosomal protein</keyword>
<keyword id="KW-0694">RNA-binding</keyword>
<keyword id="KW-0699">rRNA-binding</keyword>
<reference key="1">
    <citation type="journal article" date="2008" name="PLoS ONE">
        <title>Survival in nuclear waste, extreme resistance, and potential applications gleaned from the genome sequence of Kineococcus radiotolerans SRS30216.</title>
        <authorList>
            <person name="Bagwell C.E."/>
            <person name="Bhat S."/>
            <person name="Hawkins G.M."/>
            <person name="Smith B.W."/>
            <person name="Biswas T."/>
            <person name="Hoover T.R."/>
            <person name="Saunders E."/>
            <person name="Han C.S."/>
            <person name="Tsodikov O.V."/>
            <person name="Shimkets L.J."/>
        </authorList>
    </citation>
    <scope>NUCLEOTIDE SEQUENCE [LARGE SCALE GENOMIC DNA]</scope>
    <source>
        <strain>ATCC BAA-149 / DSM 14245 / SRS30216</strain>
    </source>
</reference>
<sequence>MVYAIVRAGGRQEKVAVGDVLTIDRVPVASGETLQLQPLLLVDGETVTHDASALAGVKVVAEVVEEAKGPKITILKYKNKTGYRKRQGHRQPLTRVKITSIGE</sequence>
<evidence type="ECO:0000255" key="1">
    <source>
        <dbReference type="HAMAP-Rule" id="MF_01363"/>
    </source>
</evidence>
<evidence type="ECO:0000305" key="2"/>